<reference key="1">
    <citation type="journal article" date="1998" name="Appl. Environ. Microbiol.">
        <title>Isolation, characterization, molecular gene cloning, and sequencing of a novel phytase from Bacillus subtilis.</title>
        <authorList>
            <person name="Kerovuo J."/>
            <person name="Lauraeus M."/>
            <person name="Nurminen P."/>
            <person name="Kalkkinen N."/>
            <person name="Apajalahti J."/>
        </authorList>
    </citation>
    <scope>NUCLEOTIDE SEQUENCE [GENOMIC DNA]</scope>
    <scope>PARTIAL PROTEIN SEQUENCE</scope>
    <source>
        <strain>VTT-E-68013</strain>
    </source>
</reference>
<reference key="2">
    <citation type="journal article" date="2001" name="Chin. J. Biotechnol.">
        <title>Cloning of neutral phytase gene nphy from Bacillus subtilis and its expression in Escherichia coli.</title>
        <authorList>
            <person name="Yao B."/>
            <person name="Yuan T."/>
            <person name="Wang Y."/>
            <person name="Fan Y."/>
        </authorList>
    </citation>
    <scope>NUCLEOTIDE SEQUENCE [GENOMIC DNA]</scope>
    <source>
        <strain>981</strain>
    </source>
</reference>
<feature type="signal peptide" evidence="1">
    <location>
        <begin position="1"/>
        <end position="26"/>
    </location>
</feature>
<feature type="propeptide" id="PRO_0000022055">
    <location>
        <begin position="27"/>
        <end position="29"/>
    </location>
</feature>
<feature type="chain" id="PRO_0000022056" description="3-phytase">
    <location>
        <begin position="30"/>
        <end position="383"/>
    </location>
</feature>
<feature type="domain" description="BPP" evidence="2">
    <location>
        <begin position="30"/>
        <end position="362"/>
    </location>
</feature>
<feature type="strand" evidence="3">
    <location>
        <begin position="35"/>
        <end position="38"/>
    </location>
</feature>
<feature type="strand" evidence="3">
    <location>
        <begin position="41"/>
        <end position="43"/>
    </location>
</feature>
<feature type="strand" evidence="3">
    <location>
        <begin position="54"/>
        <end position="60"/>
    </location>
</feature>
<feature type="helix" evidence="3">
    <location>
        <begin position="66"/>
        <end position="68"/>
    </location>
</feature>
<feature type="strand" evidence="3">
    <location>
        <begin position="70"/>
        <end position="75"/>
    </location>
</feature>
<feature type="turn" evidence="3">
    <location>
        <begin position="76"/>
        <end position="78"/>
    </location>
</feature>
<feature type="strand" evidence="3">
    <location>
        <begin position="79"/>
        <end position="84"/>
    </location>
</feature>
<feature type="strand" evidence="3">
    <location>
        <begin position="89"/>
        <end position="93"/>
    </location>
</feature>
<feature type="strand" evidence="3">
    <location>
        <begin position="98"/>
        <end position="109"/>
    </location>
</feature>
<feature type="strand" evidence="3">
    <location>
        <begin position="112"/>
        <end position="121"/>
    </location>
</feature>
<feature type="turn" evidence="4">
    <location>
        <begin position="124"/>
        <end position="126"/>
    </location>
</feature>
<feature type="strand" evidence="3">
    <location>
        <begin position="128"/>
        <end position="134"/>
    </location>
</feature>
<feature type="turn" evidence="3">
    <location>
        <begin position="136"/>
        <end position="138"/>
    </location>
</feature>
<feature type="strand" evidence="3">
    <location>
        <begin position="141"/>
        <end position="143"/>
    </location>
</feature>
<feature type="strand" evidence="3">
    <location>
        <begin position="161"/>
        <end position="165"/>
    </location>
</feature>
<feature type="turn" evidence="3">
    <location>
        <begin position="167"/>
        <end position="169"/>
    </location>
</feature>
<feature type="strand" evidence="3">
    <location>
        <begin position="172"/>
        <end position="177"/>
    </location>
</feature>
<feature type="strand" evidence="3">
    <location>
        <begin position="179"/>
        <end position="190"/>
    </location>
</feature>
<feature type="strand" evidence="3">
    <location>
        <begin position="196"/>
        <end position="205"/>
    </location>
</feature>
<feature type="strand" evidence="3">
    <location>
        <begin position="210"/>
        <end position="216"/>
    </location>
</feature>
<feature type="turn" evidence="3">
    <location>
        <begin position="217"/>
        <end position="220"/>
    </location>
</feature>
<feature type="strand" evidence="3">
    <location>
        <begin position="221"/>
        <end position="226"/>
    </location>
</feature>
<feature type="turn" evidence="3">
    <location>
        <begin position="227"/>
        <end position="229"/>
    </location>
</feature>
<feature type="strand" evidence="3">
    <location>
        <begin position="230"/>
        <end position="235"/>
    </location>
</feature>
<feature type="strand" evidence="3">
    <location>
        <begin position="245"/>
        <end position="255"/>
    </location>
</feature>
<feature type="strand" evidence="3">
    <location>
        <begin position="259"/>
        <end position="266"/>
    </location>
</feature>
<feature type="helix" evidence="3">
    <location>
        <begin position="268"/>
        <end position="270"/>
    </location>
</feature>
<feature type="strand" evidence="3">
    <location>
        <begin position="272"/>
        <end position="278"/>
    </location>
</feature>
<feature type="helix" evidence="3">
    <location>
        <begin position="279"/>
        <end position="281"/>
    </location>
</feature>
<feature type="strand" evidence="3">
    <location>
        <begin position="283"/>
        <end position="290"/>
    </location>
</feature>
<feature type="strand" evidence="3">
    <location>
        <begin position="295"/>
        <end position="301"/>
    </location>
</feature>
<feature type="strand" evidence="3">
    <location>
        <begin position="305"/>
        <end position="307"/>
    </location>
</feature>
<feature type="strand" evidence="3">
    <location>
        <begin position="316"/>
        <end position="319"/>
    </location>
</feature>
<feature type="strand" evidence="3">
    <location>
        <begin position="331"/>
        <end position="338"/>
    </location>
</feature>
<feature type="strand" evidence="3">
    <location>
        <begin position="349"/>
        <end position="354"/>
    </location>
</feature>
<feature type="helix" evidence="3">
    <location>
        <begin position="355"/>
        <end position="361"/>
    </location>
</feature>
<feature type="helix" evidence="3">
    <location>
        <begin position="368"/>
        <end position="370"/>
    </location>
</feature>
<feature type="helix" evidence="3">
    <location>
        <begin position="374"/>
        <end position="376"/>
    </location>
</feature>
<gene>
    <name type="primary">phyC</name>
    <name type="synonym">phyB13</name>
</gene>
<organism>
    <name type="scientific">Bacillus subtilis</name>
    <dbReference type="NCBI Taxonomy" id="1423"/>
    <lineage>
        <taxon>Bacteria</taxon>
        <taxon>Bacillati</taxon>
        <taxon>Bacillota</taxon>
        <taxon>Bacilli</taxon>
        <taxon>Bacillales</taxon>
        <taxon>Bacillaceae</taxon>
        <taxon>Bacillus</taxon>
    </lineage>
</organism>
<accession>O31097</accession>
<evidence type="ECO:0000255" key="1"/>
<evidence type="ECO:0000255" key="2">
    <source>
        <dbReference type="PROSITE-ProRule" id="PRU00997"/>
    </source>
</evidence>
<evidence type="ECO:0007829" key="3">
    <source>
        <dbReference type="PDB" id="3AMR"/>
    </source>
</evidence>
<evidence type="ECO:0007829" key="4">
    <source>
        <dbReference type="PDB" id="3AMS"/>
    </source>
</evidence>
<protein>
    <recommendedName>
        <fullName>3-phytase</fullName>
        <ecNumber>3.1.3.8</ecNumber>
    </recommendedName>
    <alternativeName>
        <fullName>Myo-inositol-hexaphosphate 3-phosphohydrolase</fullName>
    </alternativeName>
    <alternativeName>
        <fullName>Phytate 3-phosphatase</fullName>
    </alternativeName>
</protein>
<comment type="function">
    <text>Catalyzes the hydrolysis of inorganic orthophosphate from phytate. Only phytate, ADP, and ATP were hydrolyzed (100, 75, and 50% of the relative activity, respectively).</text>
</comment>
<comment type="catalytic activity">
    <reaction evidence="2">
        <text>1D-myo-inositol hexakisphosphate + H2O = 1D-myo-inositol 1,2,4,5,6-pentakisphosphate + phosphate</text>
        <dbReference type="Rhea" id="RHEA:16989"/>
        <dbReference type="ChEBI" id="CHEBI:15377"/>
        <dbReference type="ChEBI" id="CHEBI:43474"/>
        <dbReference type="ChEBI" id="CHEBI:57798"/>
        <dbReference type="ChEBI" id="CHEBI:58130"/>
        <dbReference type="EC" id="3.1.3.8"/>
    </reaction>
</comment>
<comment type="cofactor">
    <cofactor>
        <name>Ca(2+)</name>
        <dbReference type="ChEBI" id="CHEBI:29108"/>
    </cofactor>
    <text>Ca(2+) is required for its activity and/or stability.</text>
</comment>
<comment type="biophysicochemical properties">
    <phDependence>
        <text>Optimum pH is 7.</text>
    </phDependence>
    <temperatureDependence>
        <text>Optimum temperature is 55 degrees Celsius.</text>
    </temperatureDependence>
</comment>
<comment type="subcellular location">
    <subcellularLocation>
        <location>Secreted</location>
    </subcellularLocation>
</comment>
<comment type="induction">
    <text>By phytate.</text>
</comment>
<sequence>MNHSKTLLLTAAAGLMLTCGAVSSQAKHKLSDPYHFTVNAAAETEPVDTAGDAADDPAIWLDPKTPQNSKLITTNKKSGLVVYSLDGKMLHSYNTGKLNNVDIRYDFPLNGKKVDIAAASNRSEGKNTIEIYAIDGKNGTLQSMTDPDHPIATAINEVYGFTLYHSQKTGKYYAMVTGKEGEFEQYELKADKNGYISGKKVRAFKMNSQTEGMAADDEYGRLYIAEEDEAIWKFSAEPDGGSNGTVIDRADGRHLTRDIEGLTIYYAADGKGYLMASSQGNSSYAIYDRQGKNKYVADFRITDGPETDGTSDTDGIDVLGFGLGPEYPFGIFVAQDGENIDHGQKANQNFKIVPWERIADQIGFRPLANEQVDPRKLTDRSGK</sequence>
<keyword id="KW-0002">3D-structure</keyword>
<keyword id="KW-0903">Direct protein sequencing</keyword>
<keyword id="KW-0378">Hydrolase</keyword>
<keyword id="KW-0964">Secreted</keyword>
<keyword id="KW-0732">Signal</keyword>
<dbReference type="EC" id="3.1.3.8"/>
<dbReference type="EMBL" id="AF029053">
    <property type="protein sequence ID" value="AAC31775.1"/>
    <property type="molecule type" value="Genomic_DNA"/>
</dbReference>
<dbReference type="EMBL" id="AJ277890">
    <property type="protein sequence ID" value="CAB91845.1"/>
    <property type="molecule type" value="Genomic_DNA"/>
</dbReference>
<dbReference type="PDB" id="3AMR">
    <property type="method" value="X-ray"/>
    <property type="resolution" value="1.25 A"/>
    <property type="chains" value="A=29-383"/>
</dbReference>
<dbReference type="PDB" id="3AMS">
    <property type="method" value="X-ray"/>
    <property type="resolution" value="2.08 A"/>
    <property type="chains" value="A=29-383"/>
</dbReference>
<dbReference type="PDBsum" id="3AMR"/>
<dbReference type="PDBsum" id="3AMS"/>
<dbReference type="SMR" id="O31097"/>
<dbReference type="BRENDA" id="3.1.3.8">
    <property type="organism ID" value="658"/>
</dbReference>
<dbReference type="EvolutionaryTrace" id="O31097"/>
<dbReference type="GO" id="GO:0005576">
    <property type="term" value="C:extracellular region"/>
    <property type="evidence" value="ECO:0007669"/>
    <property type="project" value="UniProtKB-SubCell"/>
</dbReference>
<dbReference type="GO" id="GO:0016158">
    <property type="term" value="F:3-phytase activity"/>
    <property type="evidence" value="ECO:0007669"/>
    <property type="project" value="UniProtKB-EC"/>
</dbReference>
<dbReference type="Gene3D" id="2.120.10.30">
    <property type="entry name" value="TolB, C-terminal domain"/>
    <property type="match status" value="1"/>
</dbReference>
<dbReference type="InterPro" id="IPR011042">
    <property type="entry name" value="6-blade_b-propeller_TolB-like"/>
</dbReference>
<dbReference type="InterPro" id="IPR003431">
    <property type="entry name" value="BP_Phytase"/>
</dbReference>
<dbReference type="Pfam" id="PF02333">
    <property type="entry name" value="Phytase"/>
    <property type="match status" value="1"/>
</dbReference>
<dbReference type="SUPFAM" id="SSF50956">
    <property type="entry name" value="Thermostable phytase (3-phytase)"/>
    <property type="match status" value="1"/>
</dbReference>
<dbReference type="PROSITE" id="PS51662">
    <property type="entry name" value="BP_PHYTASE"/>
    <property type="match status" value="1"/>
</dbReference>
<name>PHYC_BACIU</name>
<proteinExistence type="evidence at protein level"/>